<dbReference type="EC" id="5.3.1.6" evidence="1"/>
<dbReference type="EMBL" id="CP000133">
    <property type="protein sequence ID" value="ABC91160.1"/>
    <property type="molecule type" value="Genomic_DNA"/>
</dbReference>
<dbReference type="RefSeq" id="WP_011425639.1">
    <property type="nucleotide sequence ID" value="NC_007761.1"/>
</dbReference>
<dbReference type="SMR" id="Q2K7M6"/>
<dbReference type="KEGG" id="ret:RHE_CH02380"/>
<dbReference type="eggNOG" id="COG0120">
    <property type="taxonomic scope" value="Bacteria"/>
</dbReference>
<dbReference type="HOGENOM" id="CLU_056590_1_0_5"/>
<dbReference type="OrthoDB" id="5870696at2"/>
<dbReference type="UniPathway" id="UPA00115">
    <property type="reaction ID" value="UER00412"/>
</dbReference>
<dbReference type="Proteomes" id="UP000001936">
    <property type="component" value="Chromosome"/>
</dbReference>
<dbReference type="GO" id="GO:0004751">
    <property type="term" value="F:ribose-5-phosphate isomerase activity"/>
    <property type="evidence" value="ECO:0007669"/>
    <property type="project" value="UniProtKB-UniRule"/>
</dbReference>
<dbReference type="GO" id="GO:0009052">
    <property type="term" value="P:pentose-phosphate shunt, non-oxidative branch"/>
    <property type="evidence" value="ECO:0007669"/>
    <property type="project" value="UniProtKB-UniRule"/>
</dbReference>
<dbReference type="CDD" id="cd01398">
    <property type="entry name" value="RPI_A"/>
    <property type="match status" value="1"/>
</dbReference>
<dbReference type="FunFam" id="3.40.50.1360:FF:000001">
    <property type="entry name" value="Ribose-5-phosphate isomerase A"/>
    <property type="match status" value="1"/>
</dbReference>
<dbReference type="Gene3D" id="3.30.70.260">
    <property type="match status" value="1"/>
</dbReference>
<dbReference type="Gene3D" id="3.40.50.1360">
    <property type="match status" value="1"/>
</dbReference>
<dbReference type="HAMAP" id="MF_00170">
    <property type="entry name" value="Rib_5P_isom_A"/>
    <property type="match status" value="1"/>
</dbReference>
<dbReference type="InterPro" id="IPR037171">
    <property type="entry name" value="NagB/RpiA_transferase-like"/>
</dbReference>
<dbReference type="InterPro" id="IPR050262">
    <property type="entry name" value="Ribose-5P_isomerase"/>
</dbReference>
<dbReference type="InterPro" id="IPR020672">
    <property type="entry name" value="Ribose5P_isomerase_typA_subgr"/>
</dbReference>
<dbReference type="InterPro" id="IPR004788">
    <property type="entry name" value="Ribose5P_isomerase_type_A"/>
</dbReference>
<dbReference type="NCBIfam" id="NF001924">
    <property type="entry name" value="PRK00702.1"/>
    <property type="match status" value="1"/>
</dbReference>
<dbReference type="NCBIfam" id="TIGR00021">
    <property type="entry name" value="rpiA"/>
    <property type="match status" value="1"/>
</dbReference>
<dbReference type="PANTHER" id="PTHR43748">
    <property type="entry name" value="RIBOSE-5-PHOSPHATE ISOMERASE 3, CHLOROPLASTIC-RELATED"/>
    <property type="match status" value="1"/>
</dbReference>
<dbReference type="PANTHER" id="PTHR43748:SF3">
    <property type="entry name" value="RIBOSE-5-PHOSPHATE ISOMERASE 3, CHLOROPLASTIC-RELATED"/>
    <property type="match status" value="1"/>
</dbReference>
<dbReference type="Pfam" id="PF06026">
    <property type="entry name" value="Rib_5-P_isom_A"/>
    <property type="match status" value="1"/>
</dbReference>
<dbReference type="SUPFAM" id="SSF75445">
    <property type="entry name" value="D-ribose-5-phosphate isomerase (RpiA), lid domain"/>
    <property type="match status" value="1"/>
</dbReference>
<dbReference type="SUPFAM" id="SSF100950">
    <property type="entry name" value="NagB/RpiA/CoA transferase-like"/>
    <property type="match status" value="1"/>
</dbReference>
<protein>
    <recommendedName>
        <fullName evidence="1">Ribose-5-phosphate isomerase A</fullName>
        <ecNumber evidence="1">5.3.1.6</ecNumber>
    </recommendedName>
    <alternativeName>
        <fullName evidence="1">Phosphoriboisomerase A</fullName>
        <shortName evidence="1">PRI</shortName>
    </alternativeName>
</protein>
<feature type="chain" id="PRO_1000016973" description="Ribose-5-phosphate isomerase A">
    <location>
        <begin position="1"/>
        <end position="232"/>
    </location>
</feature>
<feature type="active site" description="Proton acceptor" evidence="1">
    <location>
        <position position="105"/>
    </location>
</feature>
<feature type="binding site" evidence="1">
    <location>
        <begin position="28"/>
        <end position="31"/>
    </location>
    <ligand>
        <name>substrate</name>
    </ligand>
</feature>
<feature type="binding site" evidence="1">
    <location>
        <begin position="83"/>
        <end position="86"/>
    </location>
    <ligand>
        <name>substrate</name>
    </ligand>
</feature>
<feature type="binding site" evidence="1">
    <location>
        <begin position="96"/>
        <end position="99"/>
    </location>
    <ligand>
        <name>substrate</name>
    </ligand>
</feature>
<feature type="binding site" evidence="1">
    <location>
        <position position="123"/>
    </location>
    <ligand>
        <name>substrate</name>
    </ligand>
</feature>
<reference key="1">
    <citation type="journal article" date="2006" name="Proc. Natl. Acad. Sci. U.S.A.">
        <title>The partitioned Rhizobium etli genome: genetic and metabolic redundancy in seven interacting replicons.</title>
        <authorList>
            <person name="Gonzalez V."/>
            <person name="Santamaria R.I."/>
            <person name="Bustos P."/>
            <person name="Hernandez-Gonzalez I."/>
            <person name="Medrano-Soto A."/>
            <person name="Moreno-Hagelsieb G."/>
            <person name="Janga S.C."/>
            <person name="Ramirez M.A."/>
            <person name="Jimenez-Jacinto V."/>
            <person name="Collado-Vides J."/>
            <person name="Davila G."/>
        </authorList>
    </citation>
    <scope>NUCLEOTIDE SEQUENCE [LARGE SCALE GENOMIC DNA]</scope>
    <source>
        <strain>ATCC 51251 / DSM 11541 / JCM 21823 / NBRC 15573 / CFN 42</strain>
    </source>
</reference>
<proteinExistence type="inferred from homology"/>
<comment type="function">
    <text evidence="1">Catalyzes the reversible conversion of ribose-5-phosphate to ribulose 5-phosphate.</text>
</comment>
<comment type="catalytic activity">
    <reaction evidence="1">
        <text>aldehydo-D-ribose 5-phosphate = D-ribulose 5-phosphate</text>
        <dbReference type="Rhea" id="RHEA:14657"/>
        <dbReference type="ChEBI" id="CHEBI:58121"/>
        <dbReference type="ChEBI" id="CHEBI:58273"/>
        <dbReference type="EC" id="5.3.1.6"/>
    </reaction>
</comment>
<comment type="pathway">
    <text evidence="1">Carbohydrate degradation; pentose phosphate pathway; D-ribose 5-phosphate from D-ribulose 5-phosphate (non-oxidative stage): step 1/1.</text>
</comment>
<comment type="subunit">
    <text evidence="1">Homodimer.</text>
</comment>
<comment type="similarity">
    <text evidence="1">Belongs to the ribose 5-phosphate isomerase family.</text>
</comment>
<accession>Q2K7M6</accession>
<sequence length="232" mass="24139">MDAREMKIKAAEAALAHVESGMRLGIGTGSTAEEFVRLLAEKVAGGFQVEGVPTSERTARLCVELGVPLKSLDELPALDLTVDGADEVDPALRLIKGGGGALLREKIVAAASQRMIVIADESKLVETLGAFALPIEVNPFGLVSTRIAIEKVAARLGLSGELNLRQSGDGEFTTDGGHHIIDASFGRIPDAEALSSELNSIPGVVEHGLFINMAALAIIAGPAGARTLQANR</sequence>
<name>RPIA_RHIEC</name>
<evidence type="ECO:0000255" key="1">
    <source>
        <dbReference type="HAMAP-Rule" id="MF_00170"/>
    </source>
</evidence>
<organism>
    <name type="scientific">Rhizobium etli (strain ATCC 51251 / DSM 11541 / JCM 21823 / NBRC 15573 / CFN 42)</name>
    <dbReference type="NCBI Taxonomy" id="347834"/>
    <lineage>
        <taxon>Bacteria</taxon>
        <taxon>Pseudomonadati</taxon>
        <taxon>Pseudomonadota</taxon>
        <taxon>Alphaproteobacteria</taxon>
        <taxon>Hyphomicrobiales</taxon>
        <taxon>Rhizobiaceae</taxon>
        <taxon>Rhizobium/Agrobacterium group</taxon>
        <taxon>Rhizobium</taxon>
    </lineage>
</organism>
<gene>
    <name evidence="1" type="primary">rpiA</name>
    <name type="ordered locus">RHE_CH02380</name>
</gene>
<keyword id="KW-0413">Isomerase</keyword>
<keyword id="KW-1185">Reference proteome</keyword>